<gene>
    <name evidence="1" type="primary">queF</name>
    <name type="ordered locus">HP_1413</name>
</gene>
<dbReference type="EC" id="1.7.1.13" evidence="1"/>
<dbReference type="EMBL" id="AE000511">
    <property type="protein sequence ID" value="AAD08456.1"/>
    <property type="molecule type" value="Genomic_DNA"/>
</dbReference>
<dbReference type="PIR" id="E64696">
    <property type="entry name" value="E64696"/>
</dbReference>
<dbReference type="RefSeq" id="NP_208204.1">
    <property type="nucleotide sequence ID" value="NC_000915.1"/>
</dbReference>
<dbReference type="RefSeq" id="WP_000187118.1">
    <property type="nucleotide sequence ID" value="NC_018939.1"/>
</dbReference>
<dbReference type="SMR" id="O25959"/>
<dbReference type="DIP" id="DIP-3728N"/>
<dbReference type="IntAct" id="O25959">
    <property type="interactions" value="2"/>
</dbReference>
<dbReference type="MINT" id="O25959"/>
<dbReference type="STRING" id="85962.HP_1413"/>
<dbReference type="PaxDb" id="85962-C694_07305"/>
<dbReference type="EnsemblBacteria" id="AAD08456">
    <property type="protein sequence ID" value="AAD08456"/>
    <property type="gene ID" value="HP_1413"/>
</dbReference>
<dbReference type="KEGG" id="heo:C694_07305"/>
<dbReference type="KEGG" id="hpy:HP_1413"/>
<dbReference type="PATRIC" id="fig|85962.47.peg.1516"/>
<dbReference type="eggNOG" id="COG0780">
    <property type="taxonomic scope" value="Bacteria"/>
</dbReference>
<dbReference type="InParanoid" id="O25959"/>
<dbReference type="OrthoDB" id="9789995at2"/>
<dbReference type="PhylomeDB" id="O25959"/>
<dbReference type="UniPathway" id="UPA00392"/>
<dbReference type="Proteomes" id="UP000000429">
    <property type="component" value="Chromosome"/>
</dbReference>
<dbReference type="GO" id="GO:0005829">
    <property type="term" value="C:cytosol"/>
    <property type="evidence" value="ECO:0000318"/>
    <property type="project" value="GO_Central"/>
</dbReference>
<dbReference type="GO" id="GO:0033739">
    <property type="term" value="F:preQ1 synthase activity"/>
    <property type="evidence" value="ECO:0000318"/>
    <property type="project" value="GO_Central"/>
</dbReference>
<dbReference type="GO" id="GO:0008616">
    <property type="term" value="P:queuosine biosynthetic process"/>
    <property type="evidence" value="ECO:0000318"/>
    <property type="project" value="GO_Central"/>
</dbReference>
<dbReference type="GO" id="GO:0006400">
    <property type="term" value="P:tRNA modification"/>
    <property type="evidence" value="ECO:0007669"/>
    <property type="project" value="UniProtKB-UniRule"/>
</dbReference>
<dbReference type="Gene3D" id="3.30.1130.10">
    <property type="match status" value="1"/>
</dbReference>
<dbReference type="HAMAP" id="MF_00818">
    <property type="entry name" value="QueF_type1"/>
    <property type="match status" value="1"/>
</dbReference>
<dbReference type="InterPro" id="IPR043133">
    <property type="entry name" value="GTP-CH-I_C/QueF"/>
</dbReference>
<dbReference type="InterPro" id="IPR050084">
    <property type="entry name" value="NADPH_dep_7-cyano-7-deazaG_red"/>
</dbReference>
<dbReference type="InterPro" id="IPR029500">
    <property type="entry name" value="QueF"/>
</dbReference>
<dbReference type="InterPro" id="IPR016856">
    <property type="entry name" value="QueF_type1"/>
</dbReference>
<dbReference type="NCBIfam" id="TIGR03139">
    <property type="entry name" value="QueF-II"/>
    <property type="match status" value="1"/>
</dbReference>
<dbReference type="PANTHER" id="PTHR34354">
    <property type="entry name" value="NADPH-DEPENDENT 7-CYANO-7-DEAZAGUANINE REDUCTASE"/>
    <property type="match status" value="1"/>
</dbReference>
<dbReference type="PANTHER" id="PTHR34354:SF1">
    <property type="entry name" value="NADPH-DEPENDENT 7-CYANO-7-DEAZAGUANINE REDUCTASE"/>
    <property type="match status" value="1"/>
</dbReference>
<dbReference type="Pfam" id="PF14489">
    <property type="entry name" value="QueF"/>
    <property type="match status" value="1"/>
</dbReference>
<dbReference type="PIRSF" id="PIRSF027377">
    <property type="entry name" value="Nitrile_oxidored_QueF"/>
    <property type="match status" value="1"/>
</dbReference>
<dbReference type="SUPFAM" id="SSF55620">
    <property type="entry name" value="Tetrahydrobiopterin biosynthesis enzymes-like"/>
    <property type="match status" value="1"/>
</dbReference>
<accession>O25959</accession>
<reference key="1">
    <citation type="journal article" date="1997" name="Nature">
        <title>The complete genome sequence of the gastric pathogen Helicobacter pylori.</title>
        <authorList>
            <person name="Tomb J.-F."/>
            <person name="White O."/>
            <person name="Kerlavage A.R."/>
            <person name="Clayton R.A."/>
            <person name="Sutton G.G."/>
            <person name="Fleischmann R.D."/>
            <person name="Ketchum K.A."/>
            <person name="Klenk H.-P."/>
            <person name="Gill S.R."/>
            <person name="Dougherty B.A."/>
            <person name="Nelson K.E."/>
            <person name="Quackenbush J."/>
            <person name="Zhou L."/>
            <person name="Kirkness E.F."/>
            <person name="Peterson S.N."/>
            <person name="Loftus B.J."/>
            <person name="Richardson D.L."/>
            <person name="Dodson R.J."/>
            <person name="Khalak H.G."/>
            <person name="Glodek A."/>
            <person name="McKenney K."/>
            <person name="FitzGerald L.M."/>
            <person name="Lee N."/>
            <person name="Adams M.D."/>
            <person name="Hickey E.K."/>
            <person name="Berg D.E."/>
            <person name="Gocayne J.D."/>
            <person name="Utterback T.R."/>
            <person name="Peterson J.D."/>
            <person name="Kelley J.M."/>
            <person name="Cotton M.D."/>
            <person name="Weidman J.F."/>
            <person name="Fujii C."/>
            <person name="Bowman C."/>
            <person name="Watthey L."/>
            <person name="Wallin E."/>
            <person name="Hayes W.S."/>
            <person name="Borodovsky M."/>
            <person name="Karp P.D."/>
            <person name="Smith H.O."/>
            <person name="Fraser C.M."/>
            <person name="Venter J.C."/>
        </authorList>
    </citation>
    <scope>NUCLEOTIDE SEQUENCE [LARGE SCALE GENOMIC DNA]</scope>
    <source>
        <strain>ATCC 700392 / 26695</strain>
    </source>
</reference>
<organism>
    <name type="scientific">Helicobacter pylori (strain ATCC 700392 / 26695)</name>
    <name type="common">Campylobacter pylori</name>
    <dbReference type="NCBI Taxonomy" id="85962"/>
    <lineage>
        <taxon>Bacteria</taxon>
        <taxon>Pseudomonadati</taxon>
        <taxon>Campylobacterota</taxon>
        <taxon>Epsilonproteobacteria</taxon>
        <taxon>Campylobacterales</taxon>
        <taxon>Helicobacteraceae</taxon>
        <taxon>Helicobacter</taxon>
    </lineage>
</organism>
<keyword id="KW-0963">Cytoplasm</keyword>
<keyword id="KW-0521">NADP</keyword>
<keyword id="KW-0560">Oxidoreductase</keyword>
<keyword id="KW-0671">Queuosine biosynthesis</keyword>
<keyword id="KW-1185">Reference proteome</keyword>
<feature type="chain" id="PRO_0000162975" description="NADPH-dependent 7-cyano-7-deazaguanine reductase">
    <location>
        <begin position="1"/>
        <end position="148"/>
    </location>
</feature>
<feature type="active site" description="Thioimide intermediate" evidence="1">
    <location>
        <position position="50"/>
    </location>
</feature>
<feature type="active site" description="Proton donor" evidence="1">
    <location>
        <position position="57"/>
    </location>
</feature>
<feature type="binding site" evidence="1">
    <location>
        <begin position="72"/>
        <end position="74"/>
    </location>
    <ligand>
        <name>substrate</name>
    </ligand>
</feature>
<feature type="binding site" evidence="1">
    <location>
        <begin position="91"/>
        <end position="92"/>
    </location>
    <ligand>
        <name>substrate</name>
    </ligand>
</feature>
<protein>
    <recommendedName>
        <fullName evidence="1">NADPH-dependent 7-cyano-7-deazaguanine reductase</fullName>
        <ecNumber evidence="1">1.7.1.13</ecNumber>
    </recommendedName>
    <alternativeName>
        <fullName evidence="1">7-cyano-7-carbaguanine reductase</fullName>
    </alternativeName>
    <alternativeName>
        <fullName evidence="1">NADPH-dependent nitrile oxidoreductase</fullName>
    </alternativeName>
    <alternativeName>
        <fullName evidence="1">PreQ(0) reductase</fullName>
    </alternativeName>
</protein>
<name>QUEF_HELPY</name>
<sequence length="148" mass="17092">MTPELNLKSLGAKTPYIFEYNSQLLEAFPNPNPNLDPLITLECKEFTSLCPITSQPDFGVIFIRYIPKDKMVESKSLKLYLFSYRNHGSFHESCINTILLDLVRLLEPKYLEVYGDFASRGGIAIKPFVNYAIKEYQDFKEKRLLNAK</sequence>
<evidence type="ECO:0000255" key="1">
    <source>
        <dbReference type="HAMAP-Rule" id="MF_00818"/>
    </source>
</evidence>
<proteinExistence type="inferred from homology"/>
<comment type="function">
    <text evidence="1">Catalyzes the NADPH-dependent reduction of 7-cyano-7-deazaguanine (preQ0) to 7-aminomethyl-7-deazaguanine (preQ1).</text>
</comment>
<comment type="catalytic activity">
    <reaction evidence="1">
        <text>7-aminomethyl-7-carbaguanine + 2 NADP(+) = 7-cyano-7-deazaguanine + 2 NADPH + 3 H(+)</text>
        <dbReference type="Rhea" id="RHEA:13409"/>
        <dbReference type="ChEBI" id="CHEBI:15378"/>
        <dbReference type="ChEBI" id="CHEBI:45075"/>
        <dbReference type="ChEBI" id="CHEBI:57783"/>
        <dbReference type="ChEBI" id="CHEBI:58349"/>
        <dbReference type="ChEBI" id="CHEBI:58703"/>
        <dbReference type="EC" id="1.7.1.13"/>
    </reaction>
</comment>
<comment type="pathway">
    <text evidence="1">tRNA modification; tRNA-queuosine biosynthesis.</text>
</comment>
<comment type="subcellular location">
    <subcellularLocation>
        <location evidence="1">Cytoplasm</location>
    </subcellularLocation>
</comment>
<comment type="similarity">
    <text evidence="1">Belongs to the GTP cyclohydrolase I family. QueF type 1 subfamily.</text>
</comment>